<comment type="catalytic activity">
    <reaction evidence="1">
        <text>tRNA(Asn) + L-asparagine + ATP = L-asparaginyl-tRNA(Asn) + AMP + diphosphate + H(+)</text>
        <dbReference type="Rhea" id="RHEA:11180"/>
        <dbReference type="Rhea" id="RHEA-COMP:9659"/>
        <dbReference type="Rhea" id="RHEA-COMP:9674"/>
        <dbReference type="ChEBI" id="CHEBI:15378"/>
        <dbReference type="ChEBI" id="CHEBI:30616"/>
        <dbReference type="ChEBI" id="CHEBI:33019"/>
        <dbReference type="ChEBI" id="CHEBI:58048"/>
        <dbReference type="ChEBI" id="CHEBI:78442"/>
        <dbReference type="ChEBI" id="CHEBI:78515"/>
        <dbReference type="ChEBI" id="CHEBI:456215"/>
        <dbReference type="EC" id="6.1.1.22"/>
    </reaction>
</comment>
<comment type="subunit">
    <text evidence="1">Homodimer.</text>
</comment>
<comment type="subcellular location">
    <subcellularLocation>
        <location evidence="1">Cytoplasm</location>
    </subcellularLocation>
</comment>
<comment type="similarity">
    <text evidence="1">Belongs to the class-II aminoacyl-tRNA synthetase family.</text>
</comment>
<keyword id="KW-0030">Aminoacyl-tRNA synthetase</keyword>
<keyword id="KW-0067">ATP-binding</keyword>
<keyword id="KW-0963">Cytoplasm</keyword>
<keyword id="KW-0436">Ligase</keyword>
<keyword id="KW-0547">Nucleotide-binding</keyword>
<keyword id="KW-0648">Protein biosynthesis</keyword>
<name>SYN_BORGP</name>
<protein>
    <recommendedName>
        <fullName evidence="1">Asparagine--tRNA ligase</fullName>
        <ecNumber evidence="1">6.1.1.22</ecNumber>
    </recommendedName>
    <alternativeName>
        <fullName evidence="1">Asparaginyl-tRNA synthetase</fullName>
        <shortName evidence="1">AsnRS</shortName>
    </alternativeName>
</protein>
<sequence length="462" mass="53167">MFSSIKDILENPILNSNVTINGWIRTKRSNGKIGFIEINDGSTLKGIQAVINEEENQFTEKDLKKLTTGASISLTGLLVESPAKGQNYEIKIYSFNVIGEADSKTYPLQKKRHTFEFLREIPHLRIRTNTFGAIARVRNKISYKIHEYFQKNGFFYINTPIITSNDGEGAGEMFRVSTLKFNKPNNSLSNIDFKDDFFGKEAFLSVTGQLHGEAYAMALSKIYTFGPTFRAENSNTTRHASEFWMIEPEMAFYKLNDNISLAEDLLKYLLSSILNECSQDMDFLENYIEKGLIKKLENVINSNFEVITYTKAIEILESSKKNFEIKPCWGIDLQTDHERYLTEEIFKKPIAVIDYPKNFKAFYMKINKDNKTVKGMDILVPRIGEIIGGSEREDDLQKLENRIKELNLNIEHLNWYLDLRRFGSTPHSGFGLGLERLVQYTTGISNIRDSIPFPRTPKNLYF</sequence>
<organism>
    <name type="scientific">Borrelia garinii subsp. bavariensis (strain ATCC BAA-2496 / DSM 23469 / PBi)</name>
    <name type="common">Borreliella bavariensis</name>
    <dbReference type="NCBI Taxonomy" id="290434"/>
    <lineage>
        <taxon>Bacteria</taxon>
        <taxon>Pseudomonadati</taxon>
        <taxon>Spirochaetota</taxon>
        <taxon>Spirochaetia</taxon>
        <taxon>Spirochaetales</taxon>
        <taxon>Borreliaceae</taxon>
        <taxon>Borreliella</taxon>
    </lineage>
</organism>
<gene>
    <name evidence="1" type="primary">asnS</name>
    <name type="ordered locus">BG0102</name>
</gene>
<reference key="1">
    <citation type="journal article" date="2004" name="Nucleic Acids Res.">
        <title>Comparative analysis of the Borrelia garinii genome.</title>
        <authorList>
            <person name="Gloeckner G."/>
            <person name="Lehmann R."/>
            <person name="Romualdi A."/>
            <person name="Pradella S."/>
            <person name="Schulte-Spechtel U."/>
            <person name="Schilhabel M."/>
            <person name="Wilske B."/>
            <person name="Suehnel J."/>
            <person name="Platzer M."/>
        </authorList>
    </citation>
    <scope>NUCLEOTIDE SEQUENCE [LARGE SCALE GENOMIC DNA]</scope>
    <source>
        <strain>ATCC BAA-2496 / DSM 23469 / PBi</strain>
    </source>
</reference>
<proteinExistence type="inferred from homology"/>
<feature type="chain" id="PRO_0000176396" description="Asparagine--tRNA ligase">
    <location>
        <begin position="1"/>
        <end position="462"/>
    </location>
</feature>
<dbReference type="EC" id="6.1.1.22" evidence="1"/>
<dbReference type="EMBL" id="CP000013">
    <property type="protein sequence ID" value="AAU06960.1"/>
    <property type="molecule type" value="Genomic_DNA"/>
</dbReference>
<dbReference type="RefSeq" id="WP_011193454.1">
    <property type="nucleotide sequence ID" value="NZ_CP028872.1"/>
</dbReference>
<dbReference type="SMR" id="Q662R1"/>
<dbReference type="GeneID" id="45160897"/>
<dbReference type="KEGG" id="bga:BG0102"/>
<dbReference type="eggNOG" id="COG0017">
    <property type="taxonomic scope" value="Bacteria"/>
</dbReference>
<dbReference type="HOGENOM" id="CLU_004553_2_0_12"/>
<dbReference type="OrthoDB" id="9762036at2"/>
<dbReference type="Proteomes" id="UP000002276">
    <property type="component" value="Chromosome"/>
</dbReference>
<dbReference type="GO" id="GO:0005737">
    <property type="term" value="C:cytoplasm"/>
    <property type="evidence" value="ECO:0007669"/>
    <property type="project" value="UniProtKB-SubCell"/>
</dbReference>
<dbReference type="GO" id="GO:0004816">
    <property type="term" value="F:asparagine-tRNA ligase activity"/>
    <property type="evidence" value="ECO:0007669"/>
    <property type="project" value="UniProtKB-UniRule"/>
</dbReference>
<dbReference type="GO" id="GO:0005524">
    <property type="term" value="F:ATP binding"/>
    <property type="evidence" value="ECO:0007669"/>
    <property type="project" value="UniProtKB-UniRule"/>
</dbReference>
<dbReference type="GO" id="GO:0003676">
    <property type="term" value="F:nucleic acid binding"/>
    <property type="evidence" value="ECO:0007669"/>
    <property type="project" value="InterPro"/>
</dbReference>
<dbReference type="GO" id="GO:0006421">
    <property type="term" value="P:asparaginyl-tRNA aminoacylation"/>
    <property type="evidence" value="ECO:0007669"/>
    <property type="project" value="UniProtKB-UniRule"/>
</dbReference>
<dbReference type="CDD" id="cd00776">
    <property type="entry name" value="AsxRS_core"/>
    <property type="match status" value="1"/>
</dbReference>
<dbReference type="CDD" id="cd04318">
    <property type="entry name" value="EcAsnRS_like_N"/>
    <property type="match status" value="1"/>
</dbReference>
<dbReference type="FunFam" id="3.30.930.10:FF:000016">
    <property type="entry name" value="Asparagine--tRNA ligase"/>
    <property type="match status" value="1"/>
</dbReference>
<dbReference type="Gene3D" id="3.30.930.10">
    <property type="entry name" value="Bira Bifunctional Protein, Domain 2"/>
    <property type="match status" value="1"/>
</dbReference>
<dbReference type="Gene3D" id="2.40.50.140">
    <property type="entry name" value="Nucleic acid-binding proteins"/>
    <property type="match status" value="1"/>
</dbReference>
<dbReference type="HAMAP" id="MF_00534">
    <property type="entry name" value="Asn_tRNA_synth"/>
    <property type="match status" value="1"/>
</dbReference>
<dbReference type="InterPro" id="IPR004364">
    <property type="entry name" value="Aa-tRNA-synt_II"/>
</dbReference>
<dbReference type="InterPro" id="IPR006195">
    <property type="entry name" value="aa-tRNA-synth_II"/>
</dbReference>
<dbReference type="InterPro" id="IPR045864">
    <property type="entry name" value="aa-tRNA-synth_II/BPL/LPL"/>
</dbReference>
<dbReference type="InterPro" id="IPR004522">
    <property type="entry name" value="Asn-tRNA-ligase"/>
</dbReference>
<dbReference type="InterPro" id="IPR002312">
    <property type="entry name" value="Asp/Asn-tRNA-synth_IIb"/>
</dbReference>
<dbReference type="InterPro" id="IPR012340">
    <property type="entry name" value="NA-bd_OB-fold"/>
</dbReference>
<dbReference type="InterPro" id="IPR004365">
    <property type="entry name" value="NA-bd_OB_tRNA"/>
</dbReference>
<dbReference type="NCBIfam" id="TIGR00457">
    <property type="entry name" value="asnS"/>
    <property type="match status" value="1"/>
</dbReference>
<dbReference type="NCBIfam" id="NF003037">
    <property type="entry name" value="PRK03932.1"/>
    <property type="match status" value="1"/>
</dbReference>
<dbReference type="PANTHER" id="PTHR22594:SF34">
    <property type="entry name" value="ASPARAGINE--TRNA LIGASE, MITOCHONDRIAL-RELATED"/>
    <property type="match status" value="1"/>
</dbReference>
<dbReference type="PANTHER" id="PTHR22594">
    <property type="entry name" value="ASPARTYL/LYSYL-TRNA SYNTHETASE"/>
    <property type="match status" value="1"/>
</dbReference>
<dbReference type="Pfam" id="PF00152">
    <property type="entry name" value="tRNA-synt_2"/>
    <property type="match status" value="1"/>
</dbReference>
<dbReference type="Pfam" id="PF01336">
    <property type="entry name" value="tRNA_anti-codon"/>
    <property type="match status" value="1"/>
</dbReference>
<dbReference type="PRINTS" id="PR01042">
    <property type="entry name" value="TRNASYNTHASP"/>
</dbReference>
<dbReference type="SUPFAM" id="SSF55681">
    <property type="entry name" value="Class II aaRS and biotin synthetases"/>
    <property type="match status" value="1"/>
</dbReference>
<dbReference type="SUPFAM" id="SSF50249">
    <property type="entry name" value="Nucleic acid-binding proteins"/>
    <property type="match status" value="1"/>
</dbReference>
<dbReference type="PROSITE" id="PS50862">
    <property type="entry name" value="AA_TRNA_LIGASE_II"/>
    <property type="match status" value="1"/>
</dbReference>
<evidence type="ECO:0000255" key="1">
    <source>
        <dbReference type="HAMAP-Rule" id="MF_00534"/>
    </source>
</evidence>
<accession>Q662R1</accession>